<feature type="chain" id="PRO_0000308341" description="Phosphoglucomutase">
    <location>
        <begin position="1"/>
        <end position="552"/>
    </location>
</feature>
<feature type="active site" description="Phosphoserine intermediate" evidence="1">
    <location>
        <position position="143"/>
    </location>
</feature>
<feature type="binding site" description="via phosphate group" evidence="1">
    <location>
        <position position="143"/>
    </location>
    <ligand>
        <name>Mg(2+)</name>
        <dbReference type="ChEBI" id="CHEBI:18420"/>
    </ligand>
</feature>
<feature type="binding site" evidence="1">
    <location>
        <position position="295"/>
    </location>
    <ligand>
        <name>Mg(2+)</name>
        <dbReference type="ChEBI" id="CHEBI:18420"/>
    </ligand>
</feature>
<feature type="binding site" evidence="1">
    <location>
        <position position="297"/>
    </location>
    <ligand>
        <name>Mg(2+)</name>
        <dbReference type="ChEBI" id="CHEBI:18420"/>
    </ligand>
</feature>
<feature type="binding site" evidence="1">
    <location>
        <position position="299"/>
    </location>
    <ligand>
        <name>Mg(2+)</name>
        <dbReference type="ChEBI" id="CHEBI:18420"/>
    </ligand>
</feature>
<protein>
    <recommendedName>
        <fullName>Phosphoglucomutase</fullName>
        <shortName>PGM</shortName>
        <ecNumber>5.4.2.2</ecNumber>
    </recommendedName>
    <alternativeName>
        <fullName>Alpha-phosphoglucomutase</fullName>
    </alternativeName>
    <alternativeName>
        <fullName>Glucose phosphomutase</fullName>
    </alternativeName>
</protein>
<proteinExistence type="evidence at protein level"/>
<reference key="1">
    <citation type="journal article" date="2001" name="Lancet">
        <title>Whole genome sequencing of meticillin-resistant Staphylococcus aureus.</title>
        <authorList>
            <person name="Kuroda M."/>
            <person name="Ohta T."/>
            <person name="Uchiyama I."/>
            <person name="Baba T."/>
            <person name="Yuzawa H."/>
            <person name="Kobayashi I."/>
            <person name="Cui L."/>
            <person name="Oguchi A."/>
            <person name="Aoki K."/>
            <person name="Nagai Y."/>
            <person name="Lian J.-Q."/>
            <person name="Ito T."/>
            <person name="Kanamori M."/>
            <person name="Matsumaru H."/>
            <person name="Maruyama A."/>
            <person name="Murakami H."/>
            <person name="Hosoyama A."/>
            <person name="Mizutani-Ui Y."/>
            <person name="Takahashi N.K."/>
            <person name="Sawano T."/>
            <person name="Inoue R."/>
            <person name="Kaito C."/>
            <person name="Sekimizu K."/>
            <person name="Hirakawa H."/>
            <person name="Kuhara S."/>
            <person name="Goto S."/>
            <person name="Yabuzaki J."/>
            <person name="Kanehisa M."/>
            <person name="Yamashita A."/>
            <person name="Oshima K."/>
            <person name="Furuya K."/>
            <person name="Yoshino C."/>
            <person name="Shiba T."/>
            <person name="Hattori M."/>
            <person name="Ogasawara N."/>
            <person name="Hayashi H."/>
            <person name="Hiramatsu K."/>
        </authorList>
    </citation>
    <scope>NUCLEOTIDE SEQUENCE [LARGE SCALE GENOMIC DNA]</scope>
    <source>
        <strain>N315</strain>
    </source>
</reference>
<reference key="2">
    <citation type="submission" date="2007-10" db="UniProtKB">
        <title>Shotgun proteomic analysis of total and membrane protein extracts of S. aureus strain N315.</title>
        <authorList>
            <person name="Vaezzadeh A.R."/>
            <person name="Deshusses J."/>
            <person name="Lescuyer P."/>
            <person name="Hochstrasser D.F."/>
        </authorList>
    </citation>
    <scope>IDENTIFICATION BY MASS SPECTROMETRY [LARGE SCALE ANALYSIS]</scope>
    <source>
        <strain>N315</strain>
    </source>
</reference>
<keyword id="KW-0119">Carbohydrate metabolism</keyword>
<keyword id="KW-0313">Glucose metabolism</keyword>
<keyword id="KW-0413">Isomerase</keyword>
<keyword id="KW-0460">Magnesium</keyword>
<keyword id="KW-0479">Metal-binding</keyword>
<keyword id="KW-0597">Phosphoprotein</keyword>
<gene>
    <name type="primary">pgcA</name>
    <name type="ordered locus">SA2279</name>
</gene>
<dbReference type="EC" id="5.4.2.2"/>
<dbReference type="EMBL" id="BA000018">
    <property type="protein sequence ID" value="BAB43582.1"/>
    <property type="status" value="ALT_INIT"/>
    <property type="molecule type" value="Genomic_DNA"/>
</dbReference>
<dbReference type="PIR" id="D90052">
    <property type="entry name" value="D90052"/>
</dbReference>
<dbReference type="SMR" id="Q7A3K7"/>
<dbReference type="EnsemblBacteria" id="BAB43582">
    <property type="protein sequence ID" value="BAB43582"/>
    <property type="gene ID" value="BAB43582"/>
</dbReference>
<dbReference type="KEGG" id="sau:SA2279"/>
<dbReference type="HOGENOM" id="CLU_016950_0_0_9"/>
<dbReference type="UniPathway" id="UPA00894"/>
<dbReference type="GO" id="GO:0000287">
    <property type="term" value="F:magnesium ion binding"/>
    <property type="evidence" value="ECO:0007669"/>
    <property type="project" value="InterPro"/>
</dbReference>
<dbReference type="GO" id="GO:0004614">
    <property type="term" value="F:phosphoglucomutase activity"/>
    <property type="evidence" value="ECO:0007669"/>
    <property type="project" value="UniProtKB-EC"/>
</dbReference>
<dbReference type="GO" id="GO:0008973">
    <property type="term" value="F:phosphopentomutase activity"/>
    <property type="evidence" value="ECO:0007669"/>
    <property type="project" value="TreeGrafter"/>
</dbReference>
<dbReference type="GO" id="GO:0009246">
    <property type="term" value="P:enterobacterial common antigen biosynthetic process"/>
    <property type="evidence" value="ECO:0007669"/>
    <property type="project" value="UniProtKB-UniPathway"/>
</dbReference>
<dbReference type="GO" id="GO:0006006">
    <property type="term" value="P:glucose metabolic process"/>
    <property type="evidence" value="ECO:0007669"/>
    <property type="project" value="UniProtKB-KW"/>
</dbReference>
<dbReference type="GO" id="GO:0006166">
    <property type="term" value="P:purine ribonucleoside salvage"/>
    <property type="evidence" value="ECO:0007669"/>
    <property type="project" value="TreeGrafter"/>
</dbReference>
<dbReference type="CDD" id="cd05799">
    <property type="entry name" value="PGM2"/>
    <property type="match status" value="1"/>
</dbReference>
<dbReference type="Gene3D" id="3.40.120.10">
    <property type="entry name" value="Alpha-D-Glucose-1,6-Bisphosphate, subunit A, domain 3"/>
    <property type="match status" value="3"/>
</dbReference>
<dbReference type="Gene3D" id="3.30.310.50">
    <property type="entry name" value="Alpha-D-phosphohexomutase, C-terminal domain"/>
    <property type="match status" value="1"/>
</dbReference>
<dbReference type="InterPro" id="IPR005844">
    <property type="entry name" value="A-D-PHexomutase_a/b/a-I"/>
</dbReference>
<dbReference type="InterPro" id="IPR016055">
    <property type="entry name" value="A-D-PHexomutase_a/b/a-I/II/III"/>
</dbReference>
<dbReference type="InterPro" id="IPR005845">
    <property type="entry name" value="A-D-PHexomutase_a/b/a-II"/>
</dbReference>
<dbReference type="InterPro" id="IPR005846">
    <property type="entry name" value="A-D-PHexomutase_a/b/a-III"/>
</dbReference>
<dbReference type="InterPro" id="IPR005843">
    <property type="entry name" value="A-D-PHexomutase_C"/>
</dbReference>
<dbReference type="InterPro" id="IPR036900">
    <property type="entry name" value="A-D-PHexomutase_C_sf"/>
</dbReference>
<dbReference type="InterPro" id="IPR016066">
    <property type="entry name" value="A-D-PHexomutase_CS"/>
</dbReference>
<dbReference type="InterPro" id="IPR005841">
    <property type="entry name" value="Alpha-D-phosphohexomutase_SF"/>
</dbReference>
<dbReference type="PANTHER" id="PTHR45745:SF1">
    <property type="entry name" value="PHOSPHOGLUCOMUTASE 2B-RELATED"/>
    <property type="match status" value="1"/>
</dbReference>
<dbReference type="PANTHER" id="PTHR45745">
    <property type="entry name" value="PHOSPHOMANNOMUTASE 45A"/>
    <property type="match status" value="1"/>
</dbReference>
<dbReference type="Pfam" id="PF02878">
    <property type="entry name" value="PGM_PMM_I"/>
    <property type="match status" value="1"/>
</dbReference>
<dbReference type="Pfam" id="PF02879">
    <property type="entry name" value="PGM_PMM_II"/>
    <property type="match status" value="1"/>
</dbReference>
<dbReference type="Pfam" id="PF02880">
    <property type="entry name" value="PGM_PMM_III"/>
    <property type="match status" value="1"/>
</dbReference>
<dbReference type="Pfam" id="PF00408">
    <property type="entry name" value="PGM_PMM_IV"/>
    <property type="match status" value="1"/>
</dbReference>
<dbReference type="PRINTS" id="PR00509">
    <property type="entry name" value="PGMPMM"/>
</dbReference>
<dbReference type="SUPFAM" id="SSF55957">
    <property type="entry name" value="Phosphoglucomutase, C-terminal domain"/>
    <property type="match status" value="1"/>
</dbReference>
<dbReference type="SUPFAM" id="SSF53738">
    <property type="entry name" value="Phosphoglucomutase, first 3 domains"/>
    <property type="match status" value="3"/>
</dbReference>
<dbReference type="PROSITE" id="PS00710">
    <property type="entry name" value="PGM_PMM"/>
    <property type="match status" value="1"/>
</dbReference>
<comment type="function">
    <text evidence="1">Catalyzes the interconversion between glucose-6-phosphate and alpha-glucose-1-phosphate. This is the first step in the biosynthesis of diglucosyl-diacylglycerol (Glc2-DAG), i.e. the predominant glycolipid found in the S.aureus membrane, which is also used as a membrane anchor for lipoteichoic acid (LTA) (By similarity).</text>
</comment>
<comment type="catalytic activity">
    <reaction>
        <text>alpha-D-glucose 1-phosphate = alpha-D-glucose 6-phosphate</text>
        <dbReference type="Rhea" id="RHEA:23536"/>
        <dbReference type="ChEBI" id="CHEBI:58225"/>
        <dbReference type="ChEBI" id="CHEBI:58601"/>
        <dbReference type="EC" id="5.4.2.2"/>
    </reaction>
</comment>
<comment type="cofactor">
    <cofactor evidence="1">
        <name>Mg(2+)</name>
        <dbReference type="ChEBI" id="CHEBI:18420"/>
    </cofactor>
    <text evidence="1">Binds 1 Mg(2+) ion per subunit.</text>
</comment>
<comment type="pathway">
    <text>Glycolipid metabolism; diglucosyl-diacylglycerol biosynthesis.</text>
</comment>
<comment type="similarity">
    <text evidence="2">Belongs to the phosphohexose mutase family.</text>
</comment>
<comment type="sequence caution" evidence="2">
    <conflict type="erroneous initiation">
        <sequence resource="EMBL-CDS" id="BAB43582"/>
    </conflict>
</comment>
<sequence>MKGCLATMDKELWIERANDSLVKHFYEQQSDIEQREGFESKLTFGTAGIRGKFGLGEGRLNKFTIEKLALGLARYLNAQTNSPTIVIHYDIRHLSTEFAQIIANVLANHQITVYLPDTYKTTPELSFAVRNLNTTAGIMITASHNPKDYNGIKVYGSDGAQLSTDASELASRYIEEVGDPLQIDIPISKQNTSYIKPFPKSVTDDYMKHIQNMIGYIPKSDLQVVFTSLHGTSVPIVPELLKSLNFNQFNLVDAQCKPDPNFSSVQSANPEDHRAFDQAVELANKSHADLLISTDPDADRLGIAERDAHGHITYFNGNQIGALLLNYRIQQTSQLRHRLMIQSIVSSELTKSLARYNNVKYKEVLTGFKFIAQEIRQLDDHQNMIFAFEESYGFLSEPFVRDKDAVQIVPLIIKYASELKLYGKTLKDELEQIYQTVGRHEDTLFSHTLEGLEGKKKIESIMTHFRSNPPQEIQGLKVKAIEDYLTSEVYHLDKDTTSQINSSKSNVIRVLFDEGFIALRPSGTEPKIKLYVSLKCPDFDDVAQKINAMIFS</sequence>
<name>PGCA_STAAN</name>
<accession>Q7A3K7</accession>
<evidence type="ECO:0000250" key="1"/>
<evidence type="ECO:0000305" key="2"/>
<organism>
    <name type="scientific">Staphylococcus aureus (strain N315)</name>
    <dbReference type="NCBI Taxonomy" id="158879"/>
    <lineage>
        <taxon>Bacteria</taxon>
        <taxon>Bacillati</taxon>
        <taxon>Bacillota</taxon>
        <taxon>Bacilli</taxon>
        <taxon>Bacillales</taxon>
        <taxon>Staphylococcaceae</taxon>
        <taxon>Staphylococcus</taxon>
    </lineage>
</organism>